<proteinExistence type="inferred from homology"/>
<gene>
    <name type="primary">fhkB</name>
    <name type="synonym">fhakB</name>
    <name type="ORF">DDB_G0280599</name>
</gene>
<name>FHKB_DICDI</name>
<sequence length="1142" mass="133379">MSQDIQTQNSYSDELYSSQIYSTQQPQQPQQQPQQQQSTFSSQQSQSSSYDFIYSTPQIHSQNSQNSQFSQNPLYDDFIHSTQNSYSQRVSSQRSYSQKSSSSQISFSQIPSSQIQSSQIPSSQIHSSQIPSSQNQSSQKSQFSFSQIPSSQIPSSQKRFFQSQNDDFVPSSQVTSLQDICLPQPIQQQQQQQQQQQQQQQQQQQQQQQQQQQQQQQQCQPQQQQTQQQQQQQQQQQQQQQQQQQQQQQQQQTQQQQQQPQEDDDDYDDYDGYDNYEDFVYNEGEEGEEDYEDYEQENDDDDDEDEDDDDDDDDDDDDEEEEEESQQQHIRSRALQSRSSQSRPLLRSGFKSPISRLSQTKTSPEYIYISSQSNTHTNQLGQSSQQTNSPNVHFNSLQQKKKQQQQQQQQQQQQQQQQQQQQQQQQQQQSQQIIGSQSSQSSQLPPTQPPVEVPVNLGRLIPINASHIPINLNLKREDRIVVGRSSSCDARLIDNYLTISGKHCEIYRADNLTCLKHIPLCKDKTDCHKNFGMLIVHDISSNGSYINGELIGNGKTRILRSDDILSLGHPSGDLKFIFESEFQFNFILDIKDNVNNLNENLDYKKLRTAYDNARIENKNCALRDYYFVKEIGSGGYGIVYEGLYKLNGKRVAIKHIDLLKNGSTSKSMELVSKEYNALKNIKHRNVIEFFDIVFSSTDCFFIVELATNDLSNLLRKRCVDEDDIKRICKQLLLGFNYLHNLGIVHRDLKPENILYNEFKQGFSIKITDFGLSSFVEESQYLQTFCGTPLFFAPEVIANNFFSNGYGKSCDLWSIGVTLYLSLCKYKPFIVDCRDLYHSFINGNLGFTSKKWAKISNYAKDLVRRLLVIDPEHRITIKEALNHPWFTQDRRFFKKYPKHYKSRAQPKTQFFVECFNVYYDLKSETGFICFREHFDNLETNYALFKQNFDNNNNNNNNNNNNNNNNNNNNNNNNNINNNNNNINNNNINNNNNNNNNNNNNTNTNNINNNNNNYNNSHNHNNNNHNHNHNLNNHNHNNNHHHNHNHNHNHNHNHNHNHNHNHNHNHNHNNHNNNNNNNNNNNNNNNNNNNNNNNNNNNNNNNNNNNNNNNNYYNNNINNINNNINNNINNNNNYHQQYTQHTTM</sequence>
<evidence type="ECO:0000255" key="1"/>
<evidence type="ECO:0000255" key="2">
    <source>
        <dbReference type="PROSITE-ProRule" id="PRU00086"/>
    </source>
</evidence>
<evidence type="ECO:0000255" key="3">
    <source>
        <dbReference type="PROSITE-ProRule" id="PRU00159"/>
    </source>
</evidence>
<evidence type="ECO:0000255" key="4">
    <source>
        <dbReference type="PROSITE-ProRule" id="PRU10027"/>
    </source>
</evidence>
<evidence type="ECO:0000256" key="5">
    <source>
        <dbReference type="SAM" id="MobiDB-lite"/>
    </source>
</evidence>
<evidence type="ECO:0000305" key="6"/>
<accession>Q1ZXH2</accession>
<dbReference type="EC" id="2.7.11.1"/>
<dbReference type="EMBL" id="AAFI02000037">
    <property type="protein sequence ID" value="EAS66876.1"/>
    <property type="molecule type" value="Genomic_DNA"/>
</dbReference>
<dbReference type="RefSeq" id="XP_001134559.1">
    <property type="nucleotide sequence ID" value="XM_001134559.1"/>
</dbReference>
<dbReference type="SMR" id="Q1ZXH2"/>
<dbReference type="STRING" id="44689.Q1ZXH2"/>
<dbReference type="PaxDb" id="44689-DDB0233266"/>
<dbReference type="EnsemblProtists" id="EAS66876">
    <property type="protein sequence ID" value="EAS66876"/>
    <property type="gene ID" value="DDB_G0280599"/>
</dbReference>
<dbReference type="GeneID" id="8622630"/>
<dbReference type="KEGG" id="ddi:DDB_G0280599"/>
<dbReference type="dictyBase" id="DDB_G0280599">
    <property type="gene designation" value="fhkB"/>
</dbReference>
<dbReference type="VEuPathDB" id="AmoebaDB:DDB_G0280599"/>
<dbReference type="eggNOG" id="KOG0615">
    <property type="taxonomic scope" value="Eukaryota"/>
</dbReference>
<dbReference type="HOGENOM" id="CLU_277634_0_0_1"/>
<dbReference type="InParanoid" id="Q1ZXH2"/>
<dbReference type="OMA" id="HQIANTK"/>
<dbReference type="PRO" id="PR:Q1ZXH2"/>
<dbReference type="Proteomes" id="UP000002195">
    <property type="component" value="Chromosome 3"/>
</dbReference>
<dbReference type="GO" id="GO:0005737">
    <property type="term" value="C:cytoplasm"/>
    <property type="evidence" value="ECO:0000318"/>
    <property type="project" value="GO_Central"/>
</dbReference>
<dbReference type="GO" id="GO:0005634">
    <property type="term" value="C:nucleus"/>
    <property type="evidence" value="ECO:0000318"/>
    <property type="project" value="GO_Central"/>
</dbReference>
<dbReference type="GO" id="GO:0005524">
    <property type="term" value="F:ATP binding"/>
    <property type="evidence" value="ECO:0007669"/>
    <property type="project" value="UniProtKB-KW"/>
</dbReference>
<dbReference type="GO" id="GO:0106310">
    <property type="term" value="F:protein serine kinase activity"/>
    <property type="evidence" value="ECO:0007669"/>
    <property type="project" value="RHEA"/>
</dbReference>
<dbReference type="GO" id="GO:0004674">
    <property type="term" value="F:protein serine/threonine kinase activity"/>
    <property type="evidence" value="ECO:0000318"/>
    <property type="project" value="GO_Central"/>
</dbReference>
<dbReference type="GO" id="GO:0044773">
    <property type="term" value="P:mitotic DNA damage checkpoint signaling"/>
    <property type="evidence" value="ECO:0000318"/>
    <property type="project" value="GO_Central"/>
</dbReference>
<dbReference type="GO" id="GO:0010506">
    <property type="term" value="P:regulation of autophagy"/>
    <property type="evidence" value="ECO:0007669"/>
    <property type="project" value="InterPro"/>
</dbReference>
<dbReference type="CDD" id="cd05117">
    <property type="entry name" value="STKc_CAMK"/>
    <property type="match status" value="1"/>
</dbReference>
<dbReference type="Gene3D" id="2.60.200.20">
    <property type="match status" value="1"/>
</dbReference>
<dbReference type="Gene3D" id="1.10.510.10">
    <property type="entry name" value="Transferase(Phosphotransferase) domain 1"/>
    <property type="match status" value="1"/>
</dbReference>
<dbReference type="InterPro" id="IPR045269">
    <property type="entry name" value="Atg1-like"/>
</dbReference>
<dbReference type="InterPro" id="IPR000253">
    <property type="entry name" value="FHA_dom"/>
</dbReference>
<dbReference type="InterPro" id="IPR011009">
    <property type="entry name" value="Kinase-like_dom_sf"/>
</dbReference>
<dbReference type="InterPro" id="IPR000719">
    <property type="entry name" value="Prot_kinase_dom"/>
</dbReference>
<dbReference type="InterPro" id="IPR017441">
    <property type="entry name" value="Protein_kinase_ATP_BS"/>
</dbReference>
<dbReference type="InterPro" id="IPR008271">
    <property type="entry name" value="Ser/Thr_kinase_AS"/>
</dbReference>
<dbReference type="InterPro" id="IPR008984">
    <property type="entry name" value="SMAD_FHA_dom_sf"/>
</dbReference>
<dbReference type="PANTHER" id="PTHR24348:SF22">
    <property type="entry name" value="NON-SPECIFIC SERINE_THREONINE PROTEIN KINASE"/>
    <property type="match status" value="1"/>
</dbReference>
<dbReference type="PANTHER" id="PTHR24348">
    <property type="entry name" value="SERINE/THREONINE-PROTEIN KINASE UNC-51-RELATED"/>
    <property type="match status" value="1"/>
</dbReference>
<dbReference type="Pfam" id="PF00069">
    <property type="entry name" value="Pkinase"/>
    <property type="match status" value="1"/>
</dbReference>
<dbReference type="SMART" id="SM00240">
    <property type="entry name" value="FHA"/>
    <property type="match status" value="1"/>
</dbReference>
<dbReference type="SMART" id="SM00220">
    <property type="entry name" value="S_TKc"/>
    <property type="match status" value="1"/>
</dbReference>
<dbReference type="SUPFAM" id="SSF56112">
    <property type="entry name" value="Protein kinase-like (PK-like)"/>
    <property type="match status" value="1"/>
</dbReference>
<dbReference type="SUPFAM" id="SSF49879">
    <property type="entry name" value="SMAD/FHA domain"/>
    <property type="match status" value="1"/>
</dbReference>
<dbReference type="PROSITE" id="PS50006">
    <property type="entry name" value="FHA_DOMAIN"/>
    <property type="match status" value="1"/>
</dbReference>
<dbReference type="PROSITE" id="PS00107">
    <property type="entry name" value="PROTEIN_KINASE_ATP"/>
    <property type="match status" value="1"/>
</dbReference>
<dbReference type="PROSITE" id="PS50011">
    <property type="entry name" value="PROTEIN_KINASE_DOM"/>
    <property type="match status" value="1"/>
</dbReference>
<dbReference type="PROSITE" id="PS00108">
    <property type="entry name" value="PROTEIN_KINASE_ST"/>
    <property type="match status" value="1"/>
</dbReference>
<feature type="chain" id="PRO_0000367467" description="Probable serine/threonine-protein kinase fhkB">
    <location>
        <begin position="1"/>
        <end position="1142"/>
    </location>
</feature>
<feature type="domain" description="FHA" evidence="2">
    <location>
        <begin position="480"/>
        <end position="551"/>
    </location>
</feature>
<feature type="domain" description="Protein kinase" evidence="3">
    <location>
        <begin position="625"/>
        <end position="885"/>
    </location>
</feature>
<feature type="region of interest" description="Disordered" evidence="5">
    <location>
        <begin position="1"/>
        <end position="359"/>
    </location>
</feature>
<feature type="region of interest" description="Disordered" evidence="5">
    <location>
        <begin position="374"/>
        <end position="404"/>
    </location>
</feature>
<feature type="region of interest" description="Disordered" evidence="5">
    <location>
        <begin position="432"/>
        <end position="451"/>
    </location>
</feature>
<feature type="region of interest" description="Disordered" evidence="5">
    <location>
        <begin position="947"/>
        <end position="1142"/>
    </location>
</feature>
<feature type="coiled-coil region" evidence="1">
    <location>
        <begin position="186"/>
        <end position="302"/>
    </location>
</feature>
<feature type="coiled-coil region" evidence="1">
    <location>
        <begin position="393"/>
        <end position="434"/>
    </location>
</feature>
<feature type="coiled-coil region" evidence="1">
    <location>
        <begin position="1090"/>
        <end position="1132"/>
    </location>
</feature>
<feature type="compositionally biased region" description="Polar residues" evidence="5">
    <location>
        <begin position="1"/>
        <end position="16"/>
    </location>
</feature>
<feature type="compositionally biased region" description="Low complexity" evidence="5">
    <location>
        <begin position="17"/>
        <end position="72"/>
    </location>
</feature>
<feature type="compositionally biased region" description="Low complexity" evidence="5">
    <location>
        <begin position="83"/>
        <end position="157"/>
    </location>
</feature>
<feature type="compositionally biased region" description="Polar residues" evidence="5">
    <location>
        <begin position="158"/>
        <end position="178"/>
    </location>
</feature>
<feature type="compositionally biased region" description="Low complexity" evidence="5">
    <location>
        <begin position="187"/>
        <end position="260"/>
    </location>
</feature>
<feature type="compositionally biased region" description="Acidic residues" evidence="5">
    <location>
        <begin position="261"/>
        <end position="277"/>
    </location>
</feature>
<feature type="compositionally biased region" description="Acidic residues" evidence="5">
    <location>
        <begin position="283"/>
        <end position="325"/>
    </location>
</feature>
<feature type="compositionally biased region" description="Low complexity" evidence="5">
    <location>
        <begin position="333"/>
        <end position="348"/>
    </location>
</feature>
<feature type="compositionally biased region" description="Polar residues" evidence="5">
    <location>
        <begin position="374"/>
        <end position="397"/>
    </location>
</feature>
<feature type="compositionally biased region" description="Low complexity" evidence="5">
    <location>
        <begin position="432"/>
        <end position="443"/>
    </location>
</feature>
<feature type="compositionally biased region" description="Low complexity" evidence="5">
    <location>
        <begin position="949"/>
        <end position="1034"/>
    </location>
</feature>
<feature type="compositionally biased region" description="Basic residues" evidence="5">
    <location>
        <begin position="1035"/>
        <end position="1067"/>
    </location>
</feature>
<feature type="compositionally biased region" description="Low complexity" evidence="5">
    <location>
        <begin position="1068"/>
        <end position="1133"/>
    </location>
</feature>
<feature type="active site" description="Proton acceptor" evidence="3 4">
    <location>
        <position position="747"/>
    </location>
</feature>
<feature type="binding site" evidence="3">
    <location>
        <begin position="631"/>
        <end position="639"/>
    </location>
    <ligand>
        <name>ATP</name>
        <dbReference type="ChEBI" id="CHEBI:30616"/>
    </ligand>
</feature>
<feature type="binding site" evidence="3">
    <location>
        <position position="654"/>
    </location>
    <ligand>
        <name>ATP</name>
        <dbReference type="ChEBI" id="CHEBI:30616"/>
    </ligand>
</feature>
<protein>
    <recommendedName>
        <fullName>Probable serine/threonine-protein kinase fhkB</fullName>
        <ecNumber>2.7.11.1</ecNumber>
    </recommendedName>
    <alternativeName>
        <fullName>Forkhead-associated kinase protein B</fullName>
    </alternativeName>
</protein>
<reference key="1">
    <citation type="journal article" date="2005" name="Nature">
        <title>The genome of the social amoeba Dictyostelium discoideum.</title>
        <authorList>
            <person name="Eichinger L."/>
            <person name="Pachebat J.A."/>
            <person name="Gloeckner G."/>
            <person name="Rajandream M.A."/>
            <person name="Sucgang R."/>
            <person name="Berriman M."/>
            <person name="Song J."/>
            <person name="Olsen R."/>
            <person name="Szafranski K."/>
            <person name="Xu Q."/>
            <person name="Tunggal B."/>
            <person name="Kummerfeld S."/>
            <person name="Madera M."/>
            <person name="Konfortov B.A."/>
            <person name="Rivero F."/>
            <person name="Bankier A.T."/>
            <person name="Lehmann R."/>
            <person name="Hamlin N."/>
            <person name="Davies R."/>
            <person name="Gaudet P."/>
            <person name="Fey P."/>
            <person name="Pilcher K."/>
            <person name="Chen G."/>
            <person name="Saunders D."/>
            <person name="Sodergren E.J."/>
            <person name="Davis P."/>
            <person name="Kerhornou A."/>
            <person name="Nie X."/>
            <person name="Hall N."/>
            <person name="Anjard C."/>
            <person name="Hemphill L."/>
            <person name="Bason N."/>
            <person name="Farbrother P."/>
            <person name="Desany B."/>
            <person name="Just E."/>
            <person name="Morio T."/>
            <person name="Rost R."/>
            <person name="Churcher C.M."/>
            <person name="Cooper J."/>
            <person name="Haydock S."/>
            <person name="van Driessche N."/>
            <person name="Cronin A."/>
            <person name="Goodhead I."/>
            <person name="Muzny D.M."/>
            <person name="Mourier T."/>
            <person name="Pain A."/>
            <person name="Lu M."/>
            <person name="Harper D."/>
            <person name="Lindsay R."/>
            <person name="Hauser H."/>
            <person name="James K.D."/>
            <person name="Quiles M."/>
            <person name="Madan Babu M."/>
            <person name="Saito T."/>
            <person name="Buchrieser C."/>
            <person name="Wardroper A."/>
            <person name="Felder M."/>
            <person name="Thangavelu M."/>
            <person name="Johnson D."/>
            <person name="Knights A."/>
            <person name="Loulseged H."/>
            <person name="Mungall K.L."/>
            <person name="Oliver K."/>
            <person name="Price C."/>
            <person name="Quail M.A."/>
            <person name="Urushihara H."/>
            <person name="Hernandez J."/>
            <person name="Rabbinowitsch E."/>
            <person name="Steffen D."/>
            <person name="Sanders M."/>
            <person name="Ma J."/>
            <person name="Kohara Y."/>
            <person name="Sharp S."/>
            <person name="Simmonds M.N."/>
            <person name="Spiegler S."/>
            <person name="Tivey A."/>
            <person name="Sugano S."/>
            <person name="White B."/>
            <person name="Walker D."/>
            <person name="Woodward J.R."/>
            <person name="Winckler T."/>
            <person name="Tanaka Y."/>
            <person name="Shaulsky G."/>
            <person name="Schleicher M."/>
            <person name="Weinstock G.M."/>
            <person name="Rosenthal A."/>
            <person name="Cox E.C."/>
            <person name="Chisholm R.L."/>
            <person name="Gibbs R.A."/>
            <person name="Loomis W.F."/>
            <person name="Platzer M."/>
            <person name="Kay R.R."/>
            <person name="Williams J.G."/>
            <person name="Dear P.H."/>
            <person name="Noegel A.A."/>
            <person name="Barrell B.G."/>
            <person name="Kuspa A."/>
        </authorList>
    </citation>
    <scope>NUCLEOTIDE SEQUENCE [LARGE SCALE GENOMIC DNA]</scope>
    <source>
        <strain>AX4</strain>
    </source>
</reference>
<comment type="catalytic activity">
    <reaction>
        <text>L-seryl-[protein] + ATP = O-phospho-L-seryl-[protein] + ADP + H(+)</text>
        <dbReference type="Rhea" id="RHEA:17989"/>
        <dbReference type="Rhea" id="RHEA-COMP:9863"/>
        <dbReference type="Rhea" id="RHEA-COMP:11604"/>
        <dbReference type="ChEBI" id="CHEBI:15378"/>
        <dbReference type="ChEBI" id="CHEBI:29999"/>
        <dbReference type="ChEBI" id="CHEBI:30616"/>
        <dbReference type="ChEBI" id="CHEBI:83421"/>
        <dbReference type="ChEBI" id="CHEBI:456216"/>
        <dbReference type="EC" id="2.7.11.1"/>
    </reaction>
</comment>
<comment type="catalytic activity">
    <reaction>
        <text>L-threonyl-[protein] + ATP = O-phospho-L-threonyl-[protein] + ADP + H(+)</text>
        <dbReference type="Rhea" id="RHEA:46608"/>
        <dbReference type="Rhea" id="RHEA-COMP:11060"/>
        <dbReference type="Rhea" id="RHEA-COMP:11605"/>
        <dbReference type="ChEBI" id="CHEBI:15378"/>
        <dbReference type="ChEBI" id="CHEBI:30013"/>
        <dbReference type="ChEBI" id="CHEBI:30616"/>
        <dbReference type="ChEBI" id="CHEBI:61977"/>
        <dbReference type="ChEBI" id="CHEBI:456216"/>
        <dbReference type="EC" id="2.7.11.1"/>
    </reaction>
</comment>
<comment type="similarity">
    <text evidence="6">Belongs to the protein kinase superfamily. CAMK Ser/Thr protein kinase family. CHK2 subfamily.</text>
</comment>
<keyword id="KW-0067">ATP-binding</keyword>
<keyword id="KW-0175">Coiled coil</keyword>
<keyword id="KW-0418">Kinase</keyword>
<keyword id="KW-0547">Nucleotide-binding</keyword>
<keyword id="KW-1185">Reference proteome</keyword>
<keyword id="KW-0723">Serine/threonine-protein kinase</keyword>
<keyword id="KW-0808">Transferase</keyword>
<organism>
    <name type="scientific">Dictyostelium discoideum</name>
    <name type="common">Social amoeba</name>
    <dbReference type="NCBI Taxonomy" id="44689"/>
    <lineage>
        <taxon>Eukaryota</taxon>
        <taxon>Amoebozoa</taxon>
        <taxon>Evosea</taxon>
        <taxon>Eumycetozoa</taxon>
        <taxon>Dictyostelia</taxon>
        <taxon>Dictyosteliales</taxon>
        <taxon>Dictyosteliaceae</taxon>
        <taxon>Dictyostelium</taxon>
    </lineage>
</organism>